<organism>
    <name type="scientific">Arabidopsis thaliana</name>
    <name type="common">Mouse-ear cress</name>
    <dbReference type="NCBI Taxonomy" id="3702"/>
    <lineage>
        <taxon>Eukaryota</taxon>
        <taxon>Viridiplantae</taxon>
        <taxon>Streptophyta</taxon>
        <taxon>Embryophyta</taxon>
        <taxon>Tracheophyta</taxon>
        <taxon>Spermatophyta</taxon>
        <taxon>Magnoliopsida</taxon>
        <taxon>eudicotyledons</taxon>
        <taxon>Gunneridae</taxon>
        <taxon>Pentapetalae</taxon>
        <taxon>rosids</taxon>
        <taxon>malvids</taxon>
        <taxon>Brassicales</taxon>
        <taxon>Brassicaceae</taxon>
        <taxon>Camelineae</taxon>
        <taxon>Arabidopsis</taxon>
    </lineage>
</organism>
<feature type="chain" id="PRO_0000319345" description="Probable xyloglucan glycosyltransferase 12">
    <location>
        <begin position="1"/>
        <end position="699"/>
    </location>
</feature>
<feature type="transmembrane region" description="Helical" evidence="2">
    <location>
        <begin position="126"/>
        <end position="146"/>
    </location>
</feature>
<feature type="transmembrane region" description="Helical" evidence="2">
    <location>
        <begin position="194"/>
        <end position="214"/>
    </location>
</feature>
<feature type="transmembrane region" description="Helical" evidence="2">
    <location>
        <begin position="511"/>
        <end position="531"/>
    </location>
</feature>
<feature type="transmembrane region" description="Helical" evidence="2">
    <location>
        <begin position="536"/>
        <end position="556"/>
    </location>
</feature>
<feature type="transmembrane region" description="Helical" evidence="2">
    <location>
        <begin position="649"/>
        <end position="668"/>
    </location>
</feature>
<feature type="transmembrane region" description="Helical" evidence="2">
    <location>
        <begin position="674"/>
        <end position="694"/>
    </location>
</feature>
<feature type="region of interest" description="Disordered" evidence="3">
    <location>
        <begin position="616"/>
        <end position="646"/>
    </location>
</feature>
<feature type="compositionally biased region" description="Basic residues" evidence="3">
    <location>
        <begin position="637"/>
        <end position="646"/>
    </location>
</feature>
<feature type="active site" evidence="2">
    <location>
        <position position="280"/>
    </location>
</feature>
<feature type="active site" evidence="2">
    <location>
        <position position="433"/>
    </location>
</feature>
<feature type="binding site" evidence="2">
    <location>
        <position position="339"/>
    </location>
    <ligand>
        <name>substrate</name>
    </ligand>
</feature>
<feature type="binding site" evidence="2">
    <location>
        <position position="341"/>
    </location>
    <ligand>
        <name>substrate</name>
    </ligand>
</feature>
<feature type="modified residue" description="Phosphoserine" evidence="1">
    <location>
        <position position="626"/>
    </location>
</feature>
<feature type="cross-link" description="Glycyl lysine isopeptide (Lys-Gly) (interchain with G-Cter in ubiquitin)" evidence="9">
    <location>
        <position position="617"/>
    </location>
</feature>
<feature type="cross-link" description="Glycyl lysine isopeptide (Lys-Gly) (interchain with G-Cter in ubiquitin)" evidence="9">
    <location>
        <position position="620"/>
    </location>
</feature>
<reference key="1">
    <citation type="journal article" date="1999" name="Nature">
        <title>Sequence and analysis of chromosome 4 of the plant Arabidopsis thaliana.</title>
        <authorList>
            <person name="Mayer K.F.X."/>
            <person name="Schueller C."/>
            <person name="Wambutt R."/>
            <person name="Murphy G."/>
            <person name="Volckaert G."/>
            <person name="Pohl T."/>
            <person name="Duesterhoeft A."/>
            <person name="Stiekema W."/>
            <person name="Entian K.-D."/>
            <person name="Terryn N."/>
            <person name="Harris B."/>
            <person name="Ansorge W."/>
            <person name="Brandt P."/>
            <person name="Grivell L.A."/>
            <person name="Rieger M."/>
            <person name="Weichselgartner M."/>
            <person name="de Simone V."/>
            <person name="Obermaier B."/>
            <person name="Mache R."/>
            <person name="Mueller M."/>
            <person name="Kreis M."/>
            <person name="Delseny M."/>
            <person name="Puigdomenech P."/>
            <person name="Watson M."/>
            <person name="Schmidtheini T."/>
            <person name="Reichert B."/>
            <person name="Portetelle D."/>
            <person name="Perez-Alonso M."/>
            <person name="Boutry M."/>
            <person name="Bancroft I."/>
            <person name="Vos P."/>
            <person name="Hoheisel J."/>
            <person name="Zimmermann W."/>
            <person name="Wedler H."/>
            <person name="Ridley P."/>
            <person name="Langham S.-A."/>
            <person name="McCullagh B."/>
            <person name="Bilham L."/>
            <person name="Robben J."/>
            <person name="van der Schueren J."/>
            <person name="Grymonprez B."/>
            <person name="Chuang Y.-J."/>
            <person name="Vandenbussche F."/>
            <person name="Braeken M."/>
            <person name="Weltjens I."/>
            <person name="Voet M."/>
            <person name="Bastiaens I."/>
            <person name="Aert R."/>
            <person name="Defoor E."/>
            <person name="Weitzenegger T."/>
            <person name="Bothe G."/>
            <person name="Ramsperger U."/>
            <person name="Hilbert H."/>
            <person name="Braun M."/>
            <person name="Holzer E."/>
            <person name="Brandt A."/>
            <person name="Peters S."/>
            <person name="van Staveren M."/>
            <person name="Dirkse W."/>
            <person name="Mooijman P."/>
            <person name="Klein Lankhorst R."/>
            <person name="Rose M."/>
            <person name="Hauf J."/>
            <person name="Koetter P."/>
            <person name="Berneiser S."/>
            <person name="Hempel S."/>
            <person name="Feldpausch M."/>
            <person name="Lamberth S."/>
            <person name="Van den Daele H."/>
            <person name="De Keyser A."/>
            <person name="Buysshaert C."/>
            <person name="Gielen J."/>
            <person name="Villarroel R."/>
            <person name="De Clercq R."/>
            <person name="van Montagu M."/>
            <person name="Rogers J."/>
            <person name="Cronin A."/>
            <person name="Quail M.A."/>
            <person name="Bray-Allen S."/>
            <person name="Clark L."/>
            <person name="Doggett J."/>
            <person name="Hall S."/>
            <person name="Kay M."/>
            <person name="Lennard N."/>
            <person name="McLay K."/>
            <person name="Mayes R."/>
            <person name="Pettett A."/>
            <person name="Rajandream M.A."/>
            <person name="Lyne M."/>
            <person name="Benes V."/>
            <person name="Rechmann S."/>
            <person name="Borkova D."/>
            <person name="Bloecker H."/>
            <person name="Scharfe M."/>
            <person name="Grimm M."/>
            <person name="Loehnert T.-H."/>
            <person name="Dose S."/>
            <person name="de Haan M."/>
            <person name="Maarse A.C."/>
            <person name="Schaefer M."/>
            <person name="Mueller-Auer S."/>
            <person name="Gabel C."/>
            <person name="Fuchs M."/>
            <person name="Fartmann B."/>
            <person name="Granderath K."/>
            <person name="Dauner D."/>
            <person name="Herzl A."/>
            <person name="Neumann S."/>
            <person name="Argiriou A."/>
            <person name="Vitale D."/>
            <person name="Liguori R."/>
            <person name="Piravandi E."/>
            <person name="Massenet O."/>
            <person name="Quigley F."/>
            <person name="Clabauld G."/>
            <person name="Muendlein A."/>
            <person name="Felber R."/>
            <person name="Schnabl S."/>
            <person name="Hiller R."/>
            <person name="Schmidt W."/>
            <person name="Lecharny A."/>
            <person name="Aubourg S."/>
            <person name="Chefdor F."/>
            <person name="Cooke R."/>
            <person name="Berger C."/>
            <person name="Monfort A."/>
            <person name="Casacuberta E."/>
            <person name="Gibbons T."/>
            <person name="Weber N."/>
            <person name="Vandenbol M."/>
            <person name="Bargues M."/>
            <person name="Terol J."/>
            <person name="Torres A."/>
            <person name="Perez-Perez A."/>
            <person name="Purnelle B."/>
            <person name="Bent E."/>
            <person name="Johnson S."/>
            <person name="Tacon D."/>
            <person name="Jesse T."/>
            <person name="Heijnen L."/>
            <person name="Schwarz S."/>
            <person name="Scholler P."/>
            <person name="Heber S."/>
            <person name="Francs P."/>
            <person name="Bielke C."/>
            <person name="Frishman D."/>
            <person name="Haase D."/>
            <person name="Lemcke K."/>
            <person name="Mewes H.-W."/>
            <person name="Stocker S."/>
            <person name="Zaccaria P."/>
            <person name="Bevan M."/>
            <person name="Wilson R.K."/>
            <person name="de la Bastide M."/>
            <person name="Habermann K."/>
            <person name="Parnell L."/>
            <person name="Dedhia N."/>
            <person name="Gnoj L."/>
            <person name="Schutz K."/>
            <person name="Huang E."/>
            <person name="Spiegel L."/>
            <person name="Sekhon M."/>
            <person name="Murray J."/>
            <person name="Sheet P."/>
            <person name="Cordes M."/>
            <person name="Abu-Threideh J."/>
            <person name="Stoneking T."/>
            <person name="Kalicki J."/>
            <person name="Graves T."/>
            <person name="Harmon G."/>
            <person name="Edwards J."/>
            <person name="Latreille P."/>
            <person name="Courtney L."/>
            <person name="Cloud J."/>
            <person name="Abbott A."/>
            <person name="Scott K."/>
            <person name="Johnson D."/>
            <person name="Minx P."/>
            <person name="Bentley D."/>
            <person name="Fulton B."/>
            <person name="Miller N."/>
            <person name="Greco T."/>
            <person name="Kemp K."/>
            <person name="Kramer J."/>
            <person name="Fulton L."/>
            <person name="Mardis E."/>
            <person name="Dante M."/>
            <person name="Pepin K."/>
            <person name="Hillier L.W."/>
            <person name="Nelson J."/>
            <person name="Spieth J."/>
            <person name="Ryan E."/>
            <person name="Andrews S."/>
            <person name="Geisel C."/>
            <person name="Layman D."/>
            <person name="Du H."/>
            <person name="Ali J."/>
            <person name="Berghoff A."/>
            <person name="Jones K."/>
            <person name="Drone K."/>
            <person name="Cotton M."/>
            <person name="Joshu C."/>
            <person name="Antonoiu B."/>
            <person name="Zidanic M."/>
            <person name="Strong C."/>
            <person name="Sun H."/>
            <person name="Lamar B."/>
            <person name="Yordan C."/>
            <person name="Ma P."/>
            <person name="Zhong J."/>
            <person name="Preston R."/>
            <person name="Vil D."/>
            <person name="Shekher M."/>
            <person name="Matero A."/>
            <person name="Shah R."/>
            <person name="Swaby I.K."/>
            <person name="O'Shaughnessy A."/>
            <person name="Rodriguez M."/>
            <person name="Hoffman J."/>
            <person name="Till S."/>
            <person name="Granat S."/>
            <person name="Shohdy N."/>
            <person name="Hasegawa A."/>
            <person name="Hameed A."/>
            <person name="Lodhi M."/>
            <person name="Johnson A."/>
            <person name="Chen E."/>
            <person name="Marra M.A."/>
            <person name="Martienssen R."/>
            <person name="McCombie W.R."/>
        </authorList>
    </citation>
    <scope>NUCLEOTIDE SEQUENCE [LARGE SCALE GENOMIC DNA]</scope>
    <source>
        <strain>cv. Columbia</strain>
    </source>
</reference>
<reference key="2">
    <citation type="journal article" date="2017" name="Plant J.">
        <title>Araport11: a complete reannotation of the Arabidopsis thaliana reference genome.</title>
        <authorList>
            <person name="Cheng C.Y."/>
            <person name="Krishnakumar V."/>
            <person name="Chan A.P."/>
            <person name="Thibaud-Nissen F."/>
            <person name="Schobel S."/>
            <person name="Town C.D."/>
        </authorList>
    </citation>
    <scope>GENOME REANNOTATION</scope>
    <source>
        <strain>cv. Columbia</strain>
    </source>
</reference>
<reference key="3">
    <citation type="journal article" date="2002" name="Science">
        <title>Functional annotation of a full-length Arabidopsis cDNA collection.</title>
        <authorList>
            <person name="Seki M."/>
            <person name="Narusaka M."/>
            <person name="Kamiya A."/>
            <person name="Ishida J."/>
            <person name="Satou M."/>
            <person name="Sakurai T."/>
            <person name="Nakajima M."/>
            <person name="Enju A."/>
            <person name="Akiyama K."/>
            <person name="Oono Y."/>
            <person name="Muramatsu M."/>
            <person name="Hayashizaki Y."/>
            <person name="Kawai J."/>
            <person name="Carninci P."/>
            <person name="Itoh M."/>
            <person name="Ishii Y."/>
            <person name="Arakawa T."/>
            <person name="Shibata K."/>
            <person name="Shinagawa A."/>
            <person name="Shinozaki K."/>
        </authorList>
    </citation>
    <scope>NUCLEOTIDE SEQUENCE [LARGE SCALE MRNA]</scope>
    <source>
        <strain>cv. Columbia</strain>
    </source>
</reference>
<reference key="4">
    <citation type="journal article" date="2003" name="Science">
        <title>Empirical analysis of transcriptional activity in the Arabidopsis genome.</title>
        <authorList>
            <person name="Yamada K."/>
            <person name="Lim J."/>
            <person name="Dale J.M."/>
            <person name="Chen H."/>
            <person name="Shinn P."/>
            <person name="Palm C.J."/>
            <person name="Southwick A.M."/>
            <person name="Wu H.C."/>
            <person name="Kim C.J."/>
            <person name="Nguyen M."/>
            <person name="Pham P.K."/>
            <person name="Cheuk R.F."/>
            <person name="Karlin-Newmann G."/>
            <person name="Liu S.X."/>
            <person name="Lam B."/>
            <person name="Sakano H."/>
            <person name="Wu T."/>
            <person name="Yu G."/>
            <person name="Miranda M."/>
            <person name="Quach H.L."/>
            <person name="Tripp M."/>
            <person name="Chang C.H."/>
            <person name="Lee J.M."/>
            <person name="Toriumi M.J."/>
            <person name="Chan M.M."/>
            <person name="Tang C.C."/>
            <person name="Onodera C.S."/>
            <person name="Deng J.M."/>
            <person name="Akiyama K."/>
            <person name="Ansari Y."/>
            <person name="Arakawa T."/>
            <person name="Banh J."/>
            <person name="Banno F."/>
            <person name="Bowser L."/>
            <person name="Brooks S.Y."/>
            <person name="Carninci P."/>
            <person name="Chao Q."/>
            <person name="Choy N."/>
            <person name="Enju A."/>
            <person name="Goldsmith A.D."/>
            <person name="Gurjal M."/>
            <person name="Hansen N.F."/>
            <person name="Hayashizaki Y."/>
            <person name="Johnson-Hopson C."/>
            <person name="Hsuan V.W."/>
            <person name="Iida K."/>
            <person name="Karnes M."/>
            <person name="Khan S."/>
            <person name="Koesema E."/>
            <person name="Ishida J."/>
            <person name="Jiang P.X."/>
            <person name="Jones T."/>
            <person name="Kawai J."/>
            <person name="Kamiya A."/>
            <person name="Meyers C."/>
            <person name="Nakajima M."/>
            <person name="Narusaka M."/>
            <person name="Seki M."/>
            <person name="Sakurai T."/>
            <person name="Satou M."/>
            <person name="Tamse R."/>
            <person name="Vaysberg M."/>
            <person name="Wallender E.K."/>
            <person name="Wong C."/>
            <person name="Yamamura Y."/>
            <person name="Yuan S."/>
            <person name="Shinozaki K."/>
            <person name="Davis R.W."/>
            <person name="Theologis A."/>
            <person name="Ecker J.R."/>
        </authorList>
    </citation>
    <scope>NUCLEOTIDE SEQUENCE [LARGE SCALE MRNA]</scope>
    <source>
        <strain>cv. Columbia</strain>
    </source>
</reference>
<reference key="5">
    <citation type="submission" date="2002-03" db="EMBL/GenBank/DDBJ databases">
        <title>Full-length cDNA from Arabidopsis thaliana.</title>
        <authorList>
            <person name="Brover V.V."/>
            <person name="Troukhan M.E."/>
            <person name="Alexandrov N.A."/>
            <person name="Lu Y.-P."/>
            <person name="Flavell R.B."/>
            <person name="Feldmann K.A."/>
        </authorList>
    </citation>
    <scope>NUCLEOTIDE SEQUENCE [LARGE SCALE MRNA]</scope>
</reference>
<reference key="6">
    <citation type="journal article" date="2000" name="Plant Physiol.">
        <title>The cellulose synthase superfamily.</title>
        <authorList>
            <person name="Richmond T.A."/>
            <person name="Somerville C.R."/>
        </authorList>
    </citation>
    <scope>GENE FAMILY</scope>
    <scope>NOMENCLATURE</scope>
</reference>
<reference key="7">
    <citation type="journal article" date="2007" name="Mol. Cell. Proteomics">
        <title>Multidimensional protein identification technology (MudPIT) analysis of ubiquitinated proteins in plants.</title>
        <authorList>
            <person name="Maor R."/>
            <person name="Jones A."/>
            <person name="Nuehse T.S."/>
            <person name="Studholme D.J."/>
            <person name="Peck S.C."/>
            <person name="Shirasu K."/>
        </authorList>
    </citation>
    <scope>UBIQUITINATION [LARGE SCALE ANALYSIS] AT LYS-617 AND LYS-620</scope>
    <scope>IDENTIFICATION BY MASS SPECTROMETRY [LARGE SCALE ANALYSIS]</scope>
    <source>
        <strain>cv. Landsberg erecta</strain>
    </source>
</reference>
<reference key="8">
    <citation type="journal article" date="2020" name="Proc. Natl. Acad. Sci. U.S.A.">
        <title>The synthesis of xyloglucan, an abundant plant cell wall polysaccharide, requires CSLC function.</title>
        <authorList>
            <person name="Kim S.-J."/>
            <person name="Chandrasekar B."/>
            <person name="Rea A.C."/>
            <person name="Danhof L."/>
            <person name="Zemelis-Durfee S."/>
            <person name="Thrower N."/>
            <person name="Shepard Z.S."/>
            <person name="Pauly M."/>
            <person name="Brandizzi F."/>
            <person name="Keegstra K."/>
        </authorList>
    </citation>
    <scope>FUNCTION</scope>
    <scope>DISRUPTION PHENOTYPE</scope>
    <scope>TISSUE SPECIFICITY</scope>
    <source>
        <strain>cv. Columbia</strain>
    </source>
</reference>
<proteinExistence type="evidence at protein level"/>
<evidence type="ECO:0000250" key="1">
    <source>
        <dbReference type="UniProtKB" id="Q9LJP4"/>
    </source>
</evidence>
<evidence type="ECO:0000255" key="2"/>
<evidence type="ECO:0000256" key="3">
    <source>
        <dbReference type="SAM" id="MobiDB-lite"/>
    </source>
</evidence>
<evidence type="ECO:0000269" key="4">
    <source>
    </source>
</evidence>
<evidence type="ECO:0000303" key="5">
    <source>
    </source>
</evidence>
<evidence type="ECO:0000305" key="6"/>
<evidence type="ECO:0000312" key="7">
    <source>
        <dbReference type="Araport" id="AT4G07960"/>
    </source>
</evidence>
<evidence type="ECO:0000312" key="8">
    <source>
        <dbReference type="EMBL" id="AAD15482.1"/>
    </source>
</evidence>
<evidence type="ECO:0007744" key="9">
    <source>
    </source>
</evidence>
<accession>Q9ZQB9</accession>
<sequence length="699" mass="80123">MAPKFEWWAKGNNNNTRKGTPVVVKMENPNNWSMVELESPSHDDFLVRTHEKSRNKNARQLTWVLLLKAHRAAGCLTSLGSALFALGTAVRRRIAAGRTDIEISSSGVGSLQKQNHTKKSKLFYSCLKVFLWLSLILLGFEIAAYFKGWSFGTSKLQLQFIFNKGFFDWVYTRWVLLRVEYLAPPLQFLANGCIVLFLVQSLDRLILCLGCFWIRFKKIKPVPKPDSISDLESGDNGAFLPMVLVQIPMCNEKEVYQQSIAAVCNLDWPKGKILIQILDDSDDPITQSLIKEEVHKWQKLGARIVYRHRVNREGYKAGNLKSAMNCSYVKDYEFVAIFDADFQPLPDFLKKTIPHFKDNEEIGLVQARWSFVNKEENLLTRLQNINLAFHFEVEQQVNSVFLNFFGFNGTAGVWRIKALEDSGGWLERTTVEDMDIAVRAHLHGWKFVFLNDVECQCELPESYEAYRKQQHRWHSGPMQLFRLCLPAVIKSKISIGKKFNLIFLFFLLRKLILPFYSFTLFCIILPMTMFVPEAELPAWVVCYIPATMSFLNILPAPKSFPFIVPYLLFENTMSVTKFNAMVSGLFQLGSAYEWVVTKKSGRSSEGDLAALVEKDEKTTKHQRGVSAPETEAEKKAEKTKRKKKKHNRIYMKELSLAFLLLTAATRSLLSAQGIHFYFLLFQGISFLLVGLDLIGEQVE</sequence>
<keyword id="KW-0961">Cell wall biogenesis/degradation</keyword>
<keyword id="KW-0328">Glycosyltransferase</keyword>
<keyword id="KW-0333">Golgi apparatus</keyword>
<keyword id="KW-1017">Isopeptide bond</keyword>
<keyword id="KW-0472">Membrane</keyword>
<keyword id="KW-0597">Phosphoprotein</keyword>
<keyword id="KW-1185">Reference proteome</keyword>
<keyword id="KW-0808">Transferase</keyword>
<keyword id="KW-0812">Transmembrane</keyword>
<keyword id="KW-1133">Transmembrane helix</keyword>
<keyword id="KW-0832">Ubl conjugation</keyword>
<dbReference type="EC" id="2.4.1.-" evidence="1"/>
<dbReference type="EMBL" id="AC006266">
    <property type="protein sequence ID" value="AAD15482.1"/>
    <property type="molecule type" value="Genomic_DNA"/>
</dbReference>
<dbReference type="EMBL" id="AL161508">
    <property type="protein sequence ID" value="CAB77947.1"/>
    <property type="molecule type" value="Genomic_DNA"/>
</dbReference>
<dbReference type="EMBL" id="CP002687">
    <property type="protein sequence ID" value="AEE82586.1"/>
    <property type="molecule type" value="Genomic_DNA"/>
</dbReference>
<dbReference type="EMBL" id="CP002687">
    <property type="protein sequence ID" value="ANM66907.1"/>
    <property type="molecule type" value="Genomic_DNA"/>
</dbReference>
<dbReference type="EMBL" id="AK118480">
    <property type="protein sequence ID" value="BAC43084.1"/>
    <property type="molecule type" value="mRNA"/>
</dbReference>
<dbReference type="EMBL" id="AY087066">
    <property type="protein sequence ID" value="AAM64627.1"/>
    <property type="molecule type" value="mRNA"/>
</dbReference>
<dbReference type="EMBL" id="BT008770">
    <property type="protein sequence ID" value="AAP68209.1"/>
    <property type="molecule type" value="mRNA"/>
</dbReference>
<dbReference type="PIR" id="B85078">
    <property type="entry name" value="B85078"/>
</dbReference>
<dbReference type="RefSeq" id="NP_001328773.1">
    <property type="nucleotide sequence ID" value="NM_001340568.1"/>
</dbReference>
<dbReference type="RefSeq" id="NP_192536.1">
    <property type="nucleotide sequence ID" value="NM_116866.3"/>
</dbReference>
<dbReference type="SMR" id="Q9ZQB9"/>
<dbReference type="FunCoup" id="Q9ZQB9">
    <property type="interactions" value="23"/>
</dbReference>
<dbReference type="STRING" id="3702.Q9ZQB9"/>
<dbReference type="CAZy" id="GT2">
    <property type="family name" value="Glycosyltransferase Family 2"/>
</dbReference>
<dbReference type="iPTMnet" id="Q9ZQB9"/>
<dbReference type="PaxDb" id="3702-AT4G07960.1"/>
<dbReference type="ProteomicsDB" id="222663"/>
<dbReference type="EnsemblPlants" id="AT4G07960.1">
    <property type="protein sequence ID" value="AT4G07960.1"/>
    <property type="gene ID" value="AT4G07960"/>
</dbReference>
<dbReference type="EnsemblPlants" id="AT4G07960.2">
    <property type="protein sequence ID" value="AT4G07960.2"/>
    <property type="gene ID" value="AT4G07960"/>
</dbReference>
<dbReference type="GeneID" id="826301"/>
<dbReference type="Gramene" id="AT4G07960.1">
    <property type="protein sequence ID" value="AT4G07960.1"/>
    <property type="gene ID" value="AT4G07960"/>
</dbReference>
<dbReference type="Gramene" id="AT4G07960.2">
    <property type="protein sequence ID" value="AT4G07960.2"/>
    <property type="gene ID" value="AT4G07960"/>
</dbReference>
<dbReference type="KEGG" id="ath:AT4G07960"/>
<dbReference type="Araport" id="AT4G07960"/>
<dbReference type="TAIR" id="AT4G07960">
    <property type="gene designation" value="CSLC12"/>
</dbReference>
<dbReference type="eggNOG" id="ENOG502QTBF">
    <property type="taxonomic scope" value="Eukaryota"/>
</dbReference>
<dbReference type="HOGENOM" id="CLU_012856_1_0_1"/>
<dbReference type="InParanoid" id="Q9ZQB9"/>
<dbReference type="OMA" id="KSAMNCN"/>
<dbReference type="OrthoDB" id="72851at2759"/>
<dbReference type="PhylomeDB" id="Q9ZQB9"/>
<dbReference type="BioCyc" id="ARA:AT4G07960-MONOMER"/>
<dbReference type="PRO" id="PR:Q9ZQB9"/>
<dbReference type="Proteomes" id="UP000006548">
    <property type="component" value="Chromosome 4"/>
</dbReference>
<dbReference type="ExpressionAtlas" id="Q9ZQB9">
    <property type="expression patterns" value="baseline and differential"/>
</dbReference>
<dbReference type="GO" id="GO:0005794">
    <property type="term" value="C:Golgi apparatus"/>
    <property type="evidence" value="ECO:0000250"/>
    <property type="project" value="UniProtKB"/>
</dbReference>
<dbReference type="GO" id="GO:0000139">
    <property type="term" value="C:Golgi membrane"/>
    <property type="evidence" value="ECO:0007669"/>
    <property type="project" value="UniProtKB-SubCell"/>
</dbReference>
<dbReference type="GO" id="GO:0009506">
    <property type="term" value="C:plasmodesma"/>
    <property type="evidence" value="ECO:0007005"/>
    <property type="project" value="TAIR"/>
</dbReference>
<dbReference type="GO" id="GO:0016757">
    <property type="term" value="F:glycosyltransferase activity"/>
    <property type="evidence" value="ECO:0000315"/>
    <property type="project" value="UniProtKB"/>
</dbReference>
<dbReference type="GO" id="GO:0042803">
    <property type="term" value="F:protein homodimerization activity"/>
    <property type="evidence" value="ECO:0000250"/>
    <property type="project" value="UniProtKB"/>
</dbReference>
<dbReference type="GO" id="GO:0071555">
    <property type="term" value="P:cell wall organization"/>
    <property type="evidence" value="ECO:0000315"/>
    <property type="project" value="UniProtKB"/>
</dbReference>
<dbReference type="GO" id="GO:0099402">
    <property type="term" value="P:plant organ development"/>
    <property type="evidence" value="ECO:0000315"/>
    <property type="project" value="UniProtKB"/>
</dbReference>
<dbReference type="GO" id="GO:0048868">
    <property type="term" value="P:pollen tube development"/>
    <property type="evidence" value="ECO:0000315"/>
    <property type="project" value="UniProtKB"/>
</dbReference>
<dbReference type="FunFam" id="3.90.550.10:FF:000007">
    <property type="entry name" value="probable xyloglucan glycosyltransferase 5"/>
    <property type="match status" value="1"/>
</dbReference>
<dbReference type="Gene3D" id="3.90.550.10">
    <property type="entry name" value="Spore Coat Polysaccharide Biosynthesis Protein SpsA, Chain A"/>
    <property type="match status" value="1"/>
</dbReference>
<dbReference type="InterPro" id="IPR001173">
    <property type="entry name" value="Glyco_trans_2-like"/>
</dbReference>
<dbReference type="InterPro" id="IPR029044">
    <property type="entry name" value="Nucleotide-diphossugar_trans"/>
</dbReference>
<dbReference type="PANTHER" id="PTHR32044">
    <property type="entry name" value="GLUCOMANNAN 4-BETA-MANNOSYLTRANSFERASE 9"/>
    <property type="match status" value="1"/>
</dbReference>
<dbReference type="PANTHER" id="PTHR32044:SF44">
    <property type="entry name" value="XYLOGLUCAN GLYCOSYLTRANSFERASE 12-RELATED"/>
    <property type="match status" value="1"/>
</dbReference>
<dbReference type="Pfam" id="PF13632">
    <property type="entry name" value="Glyco_trans_2_3"/>
    <property type="match status" value="1"/>
</dbReference>
<dbReference type="SUPFAM" id="SSF53448">
    <property type="entry name" value="Nucleotide-diphospho-sugar transferases"/>
    <property type="match status" value="1"/>
</dbReference>
<protein>
    <recommendedName>
        <fullName evidence="5">Probable xyloglucan glycosyltransferase 12</fullName>
        <ecNumber evidence="1">2.4.1.-</ecNumber>
    </recommendedName>
    <alternativeName>
        <fullName evidence="5">Cellulose synthase-like protein C12</fullName>
        <shortName evidence="5">AtCslC12</shortName>
    </alternativeName>
</protein>
<comment type="function">
    <text evidence="4">Probable beta-1,4-glucan synthase rather involved in the synthesis of the xyloglucan backbone than cellulose. Seems to work simultaneously with xyloglucan 6-xylosyltransferase. Xyloglucan is a noncellulosic polysaccharides of plant cell wall and consists of a glucan backbone substituted by xylose, galactose and fucose.</text>
</comment>
<comment type="subunit">
    <text evidence="1">Homodimer.</text>
</comment>
<comment type="subcellular location">
    <subcellularLocation>
        <location evidence="1">Golgi apparatus membrane</location>
        <topology evidence="6">Multi-pass membrane protein</topology>
    </subcellularLocation>
</comment>
<comment type="tissue specificity">
    <text evidence="4">Mainly expressed in roots, flowers and seeds, and, at very low levels, in seedlings, leaves and stems.</text>
</comment>
<comment type="disruption phenotype">
    <text evidence="4">Normal xyloglucan (XyG) levels (PubMed:32737163). Plants missing several xyloglucan synthases (e.g. CSLC4, CSLC5, CSLC6, CSLC8 and CSLC12) have no detectable XyG levels and several associated phenotypes including reduced stems height and leaves area, as well as shorter root hairs and reduced pollen tube formation ability (PubMed:32737163).</text>
</comment>
<comment type="similarity">
    <text evidence="6">Belongs to the glycosyltransferase 2 family. Plant cellulose synthase-like C subfamily.</text>
</comment>
<gene>
    <name evidence="5" type="primary">CSLC12</name>
    <name evidence="7" type="ordered locus">At4g07960</name>
    <name evidence="8" type="ORF">F1K3.3</name>
</gene>
<name>CSLCC_ARATH</name>